<dbReference type="EMBL" id="CP000264">
    <property type="protein sequence ID" value="ABD53524.1"/>
    <property type="molecule type" value="Genomic_DNA"/>
</dbReference>
<dbReference type="RefSeq" id="WP_011453732.1">
    <property type="nucleotide sequence ID" value="NC_007802.1"/>
</dbReference>
<dbReference type="SMR" id="Q28UT8"/>
<dbReference type="STRING" id="290400.Jann_0607"/>
<dbReference type="KEGG" id="jan:Jann_0607"/>
<dbReference type="eggNOG" id="COG0256">
    <property type="taxonomic scope" value="Bacteria"/>
</dbReference>
<dbReference type="HOGENOM" id="CLU_098841_0_1_5"/>
<dbReference type="OrthoDB" id="9810939at2"/>
<dbReference type="Proteomes" id="UP000008326">
    <property type="component" value="Chromosome"/>
</dbReference>
<dbReference type="GO" id="GO:0022625">
    <property type="term" value="C:cytosolic large ribosomal subunit"/>
    <property type="evidence" value="ECO:0007669"/>
    <property type="project" value="TreeGrafter"/>
</dbReference>
<dbReference type="GO" id="GO:0008097">
    <property type="term" value="F:5S rRNA binding"/>
    <property type="evidence" value="ECO:0007669"/>
    <property type="project" value="TreeGrafter"/>
</dbReference>
<dbReference type="GO" id="GO:0003735">
    <property type="term" value="F:structural constituent of ribosome"/>
    <property type="evidence" value="ECO:0007669"/>
    <property type="project" value="InterPro"/>
</dbReference>
<dbReference type="GO" id="GO:0006412">
    <property type="term" value="P:translation"/>
    <property type="evidence" value="ECO:0007669"/>
    <property type="project" value="UniProtKB-UniRule"/>
</dbReference>
<dbReference type="CDD" id="cd00432">
    <property type="entry name" value="Ribosomal_L18_L5e"/>
    <property type="match status" value="1"/>
</dbReference>
<dbReference type="FunFam" id="3.30.420.100:FF:000001">
    <property type="entry name" value="50S ribosomal protein L18"/>
    <property type="match status" value="1"/>
</dbReference>
<dbReference type="Gene3D" id="3.30.420.100">
    <property type="match status" value="1"/>
</dbReference>
<dbReference type="HAMAP" id="MF_01337_B">
    <property type="entry name" value="Ribosomal_uL18_B"/>
    <property type="match status" value="1"/>
</dbReference>
<dbReference type="InterPro" id="IPR004389">
    <property type="entry name" value="Ribosomal_uL18_bac-type"/>
</dbReference>
<dbReference type="InterPro" id="IPR005484">
    <property type="entry name" value="Ribosomal_uL18_bac/euk"/>
</dbReference>
<dbReference type="NCBIfam" id="TIGR00060">
    <property type="entry name" value="L18_bact"/>
    <property type="match status" value="1"/>
</dbReference>
<dbReference type="PANTHER" id="PTHR12899">
    <property type="entry name" value="39S RIBOSOMAL PROTEIN L18, MITOCHONDRIAL"/>
    <property type="match status" value="1"/>
</dbReference>
<dbReference type="PANTHER" id="PTHR12899:SF3">
    <property type="entry name" value="LARGE RIBOSOMAL SUBUNIT PROTEIN UL18M"/>
    <property type="match status" value="1"/>
</dbReference>
<dbReference type="Pfam" id="PF00861">
    <property type="entry name" value="Ribosomal_L18p"/>
    <property type="match status" value="1"/>
</dbReference>
<dbReference type="SUPFAM" id="SSF53137">
    <property type="entry name" value="Translational machinery components"/>
    <property type="match status" value="1"/>
</dbReference>
<name>RL18_JANSC</name>
<evidence type="ECO:0000255" key="1">
    <source>
        <dbReference type="HAMAP-Rule" id="MF_01337"/>
    </source>
</evidence>
<evidence type="ECO:0000305" key="2"/>
<organism>
    <name type="scientific">Jannaschia sp. (strain CCS1)</name>
    <dbReference type="NCBI Taxonomy" id="290400"/>
    <lineage>
        <taxon>Bacteria</taxon>
        <taxon>Pseudomonadati</taxon>
        <taxon>Pseudomonadota</taxon>
        <taxon>Alphaproteobacteria</taxon>
        <taxon>Rhodobacterales</taxon>
        <taxon>Roseobacteraceae</taxon>
        <taxon>Jannaschia</taxon>
    </lineage>
</organism>
<feature type="chain" id="PRO_0000251320" description="Large ribosomal subunit protein uL18">
    <location>
        <begin position="1"/>
        <end position="119"/>
    </location>
</feature>
<protein>
    <recommendedName>
        <fullName evidence="1">Large ribosomal subunit protein uL18</fullName>
    </recommendedName>
    <alternativeName>
        <fullName evidence="2">50S ribosomal protein L18</fullName>
    </alternativeName>
</protein>
<gene>
    <name evidence="1" type="primary">rplR</name>
    <name type="ordered locus">Jann_0607</name>
</gene>
<sequence>MALSKRELFQKRRLRNRNKMRKMANGRARLSVHRSNKNISVQLIDDLNGVTLASASSLEPSLGVVGKNNVEASAKIGEAIAERAKKAGVEECYFDRGGFLFHGRVKALADAAREGGLKF</sequence>
<proteinExistence type="inferred from homology"/>
<reference key="1">
    <citation type="submission" date="2006-02" db="EMBL/GenBank/DDBJ databases">
        <title>Complete sequence of chromosome of Jannaschia sp. CCS1.</title>
        <authorList>
            <consortium name="US DOE Joint Genome Institute"/>
            <person name="Copeland A."/>
            <person name="Lucas S."/>
            <person name="Lapidus A."/>
            <person name="Barry K."/>
            <person name="Detter J.C."/>
            <person name="Glavina del Rio T."/>
            <person name="Hammon N."/>
            <person name="Israni S."/>
            <person name="Pitluck S."/>
            <person name="Brettin T."/>
            <person name="Bruce D."/>
            <person name="Han C."/>
            <person name="Tapia R."/>
            <person name="Gilna P."/>
            <person name="Chertkov O."/>
            <person name="Saunders E."/>
            <person name="Schmutz J."/>
            <person name="Larimer F."/>
            <person name="Land M."/>
            <person name="Kyrpides N."/>
            <person name="Lykidis A."/>
            <person name="Moran M.A."/>
            <person name="Belas R."/>
            <person name="Ye W."/>
            <person name="Buchan A."/>
            <person name="Gonzalez J.M."/>
            <person name="Schell M.A."/>
            <person name="Richardson P."/>
        </authorList>
    </citation>
    <scope>NUCLEOTIDE SEQUENCE [LARGE SCALE GENOMIC DNA]</scope>
    <source>
        <strain>CCS1</strain>
    </source>
</reference>
<accession>Q28UT8</accession>
<comment type="function">
    <text evidence="1">This is one of the proteins that bind and probably mediate the attachment of the 5S RNA into the large ribosomal subunit, where it forms part of the central protuberance.</text>
</comment>
<comment type="subunit">
    <text evidence="1">Part of the 50S ribosomal subunit; part of the 5S rRNA/L5/L18/L25 subcomplex. Contacts the 5S and 23S rRNAs.</text>
</comment>
<comment type="similarity">
    <text evidence="1">Belongs to the universal ribosomal protein uL18 family.</text>
</comment>
<keyword id="KW-1185">Reference proteome</keyword>
<keyword id="KW-0687">Ribonucleoprotein</keyword>
<keyword id="KW-0689">Ribosomal protein</keyword>
<keyword id="KW-0694">RNA-binding</keyword>
<keyword id="KW-0699">rRNA-binding</keyword>